<organism>
    <name type="scientific">Thermococcus kodakarensis (strain ATCC BAA-918 / JCM 12380 / KOD1)</name>
    <name type="common">Pyrococcus kodakaraensis (strain KOD1)</name>
    <dbReference type="NCBI Taxonomy" id="69014"/>
    <lineage>
        <taxon>Archaea</taxon>
        <taxon>Methanobacteriati</taxon>
        <taxon>Methanobacteriota</taxon>
        <taxon>Thermococci</taxon>
        <taxon>Thermococcales</taxon>
        <taxon>Thermococcaceae</taxon>
        <taxon>Thermococcus</taxon>
    </lineage>
</organism>
<name>SPT4_THEKO</name>
<feature type="chain" id="PRO_0000460371" description="Transcription elongation factor Spt4">
    <location>
        <begin position="1"/>
        <end position="67"/>
    </location>
</feature>
<feature type="binding site" evidence="1">
    <location>
        <position position="7"/>
    </location>
    <ligand>
        <name>Zn(2+)</name>
        <dbReference type="ChEBI" id="CHEBI:29105"/>
    </ligand>
</feature>
<feature type="binding site" evidence="1">
    <location>
        <position position="10"/>
    </location>
    <ligand>
        <name>Zn(2+)</name>
        <dbReference type="ChEBI" id="CHEBI:29105"/>
    </ligand>
</feature>
<feature type="binding site" evidence="1">
    <location>
        <position position="19"/>
    </location>
    <ligand>
        <name>Zn(2+)</name>
        <dbReference type="ChEBI" id="CHEBI:29105"/>
    </ligand>
</feature>
<feature type="binding site" evidence="1">
    <location>
        <position position="22"/>
    </location>
    <ligand>
        <name>Zn(2+)</name>
        <dbReference type="ChEBI" id="CHEBI:29105"/>
    </ligand>
</feature>
<feature type="strand" evidence="8">
    <location>
        <begin position="5"/>
        <end position="7"/>
    </location>
</feature>
<feature type="turn" evidence="8">
    <location>
        <begin position="8"/>
        <end position="10"/>
    </location>
</feature>
<feature type="strand" evidence="8">
    <location>
        <begin position="12"/>
        <end position="18"/>
    </location>
</feature>
<feature type="turn" evidence="8">
    <location>
        <begin position="20"/>
        <end position="22"/>
    </location>
</feature>
<feature type="strand" evidence="8">
    <location>
        <begin position="27"/>
        <end position="29"/>
    </location>
</feature>
<feature type="strand" evidence="8">
    <location>
        <begin position="31"/>
        <end position="38"/>
    </location>
</feature>
<feature type="helix" evidence="8">
    <location>
        <begin position="43"/>
        <end position="51"/>
    </location>
</feature>
<feature type="turn" evidence="8">
    <location>
        <begin position="53"/>
        <end position="56"/>
    </location>
</feature>
<feature type="strand" evidence="8">
    <location>
        <begin position="57"/>
        <end position="66"/>
    </location>
</feature>
<evidence type="ECO:0000255" key="1">
    <source>
        <dbReference type="HAMAP-Rule" id="MF_00949"/>
    </source>
</evidence>
<evidence type="ECO:0000269" key="2">
    <source>
    </source>
</evidence>
<evidence type="ECO:0000269" key="3">
    <source>
    </source>
</evidence>
<evidence type="ECO:0000303" key="4">
    <source>
    </source>
</evidence>
<evidence type="ECO:0000305" key="5">
    <source>
    </source>
</evidence>
<evidence type="ECO:0000305" key="6">
    <source>
    </source>
</evidence>
<evidence type="ECO:0000312" key="7">
    <source>
        <dbReference type="EMBL" id="BAD85887.1"/>
    </source>
</evidence>
<evidence type="ECO:0007829" key="8">
    <source>
        <dbReference type="PDB" id="9BCU"/>
    </source>
</evidence>
<reference evidence="7" key="1">
    <citation type="journal article" date="2005" name="Genome Res.">
        <title>Complete genome sequence of the hyperthermophilic archaeon Thermococcus kodakaraensis KOD1 and comparison with Pyrococcus genomes.</title>
        <authorList>
            <person name="Fukui T."/>
            <person name="Atomi H."/>
            <person name="Kanai T."/>
            <person name="Matsumi R."/>
            <person name="Fujiwara S."/>
            <person name="Imanaka T."/>
        </authorList>
    </citation>
    <scope>NUCLEOTIDE SEQUENCE [LARGE SCALE GENOMIC DNA]</scope>
    <source>
        <strain>ATCC BAA-918 / JCM 12380 / KOD1</strain>
    </source>
</reference>
<reference key="2">
    <citation type="journal article" date="2019" name="Mol. Microbiol.">
        <title>TFS and Spt4/5 accelerate transcription through archaeal histone-based chromatin.</title>
        <authorList>
            <person name="Sanders T.J."/>
            <person name="Lammers M."/>
            <person name="Marshall C.J."/>
            <person name="Walker J.E."/>
            <person name="Lynch E.R."/>
            <person name="Santangelo T.J."/>
        </authorList>
    </citation>
    <scope>FUNCTION</scope>
    <scope>PROBABLE SUBUNIT</scope>
    <scope>SUBCELLULAR LOCATION</scope>
    <scope>DISRUPTION PHENOTYPE</scope>
</reference>
<reference key="3">
    <citation type="journal article" date="2020" name="Nat. Microbiol.">
        <title>FttA is a CPSF73 homologue that terminates transcription in Archaea.</title>
        <authorList>
            <person name="Sanders T.J."/>
            <person name="Wenck B.R."/>
            <person name="Selan J.N."/>
            <person name="Barker M.P."/>
            <person name="Trimmer S.A."/>
            <person name="Walker J.E."/>
            <person name="Santangelo T.J."/>
        </authorList>
    </citation>
    <scope>FUNCTION</scope>
    <scope>PROBABLE SUBUNIT</scope>
    <source>
        <strain>ATCC BAA-918 / JCM 12380 / KOD1</strain>
    </source>
</reference>
<proteinExistence type="evidence at protein level"/>
<accession>Q5JIY5</accession>
<keyword id="KW-0002">3D-structure</keyword>
<keyword id="KW-0158">Chromosome</keyword>
<keyword id="KW-0240">DNA-directed RNA polymerase</keyword>
<keyword id="KW-0479">Metal-binding</keyword>
<keyword id="KW-1185">Reference proteome</keyword>
<keyword id="KW-0804">Transcription</keyword>
<keyword id="KW-0805">Transcription regulation</keyword>
<keyword id="KW-0862">Zinc</keyword>
<gene>
    <name evidence="1 4" type="primary">spt4</name>
    <name evidence="7" type="ordered locus">TK1698</name>
</gene>
<protein>
    <recommendedName>
        <fullName evidence="1 4">Transcription elongation factor Spt4</fullName>
    </recommendedName>
</protein>
<comment type="function">
    <text evidence="2 3">The Stp4-Spt5 complex stimulates transcription elongation on both naked DNA and histone-bound DNA (chromatin), facilitating transcription through the histone barrier (PubMed:30592095). Neither protein functions alone (PubMed:30592095). The complex also stimulates the transcription termination activity of FttA, neither protein alone stimulates FttA-dependent termination (PubMed:32094586).</text>
</comment>
<comment type="subunit">
    <text evidence="1 5 6">Heterodimer composed of Spt4 and Spt5. Interacts with RNA polymerase (RNAP) (PubMed:30592095, PubMed:32094586). The complex interacts with FttA (PubMed:32094586).</text>
</comment>
<comment type="subcellular location">
    <subcellularLocation>
        <location evidence="2">Chromosome</location>
    </subcellularLocation>
</comment>
<comment type="disruption phenotype">
    <text evidence="2">Essential, it cannot be deleted (PubMed:30592095).</text>
</comment>
<comment type="similarity">
    <text evidence="1">Belongs to the archaeal Spt4 family.</text>
</comment>
<dbReference type="EMBL" id="AP006878">
    <property type="protein sequence ID" value="BAD85887.1"/>
    <property type="molecule type" value="Genomic_DNA"/>
</dbReference>
<dbReference type="RefSeq" id="WP_011250649.1">
    <property type="nucleotide sequence ID" value="NC_006624.1"/>
</dbReference>
<dbReference type="PDB" id="9BCT">
    <property type="method" value="EM"/>
    <property type="resolution" value="2.50 A"/>
    <property type="chains" value="I=1-67"/>
</dbReference>
<dbReference type="PDB" id="9BCU">
    <property type="method" value="EM"/>
    <property type="resolution" value="2.20 A"/>
    <property type="chains" value="I=1-67"/>
</dbReference>
<dbReference type="PDBsum" id="9BCT"/>
<dbReference type="PDBsum" id="9BCU"/>
<dbReference type="EMDB" id="EMD-44438"/>
<dbReference type="EMDB" id="EMD-44439"/>
<dbReference type="SMR" id="Q5JIY5"/>
<dbReference type="FunCoup" id="Q5JIY5">
    <property type="interactions" value="10"/>
</dbReference>
<dbReference type="STRING" id="69014.TK1698"/>
<dbReference type="EnsemblBacteria" id="BAD85887">
    <property type="protein sequence ID" value="BAD85887"/>
    <property type="gene ID" value="TK1698"/>
</dbReference>
<dbReference type="GeneID" id="78448227"/>
<dbReference type="KEGG" id="tko:TK1698"/>
<dbReference type="PATRIC" id="fig|69014.16.peg.1656"/>
<dbReference type="eggNOG" id="arCOG04077">
    <property type="taxonomic scope" value="Archaea"/>
</dbReference>
<dbReference type="HOGENOM" id="CLU_199467_0_0_2"/>
<dbReference type="InParanoid" id="Q5JIY5"/>
<dbReference type="OrthoDB" id="275101at2157"/>
<dbReference type="PhylomeDB" id="Q5JIY5"/>
<dbReference type="Proteomes" id="UP000000536">
    <property type="component" value="Chromosome"/>
</dbReference>
<dbReference type="GO" id="GO:0005694">
    <property type="term" value="C:chromosome"/>
    <property type="evidence" value="ECO:0007669"/>
    <property type="project" value="UniProtKB-SubCell"/>
</dbReference>
<dbReference type="GO" id="GO:0000428">
    <property type="term" value="C:DNA-directed RNA polymerase complex"/>
    <property type="evidence" value="ECO:0007669"/>
    <property type="project" value="UniProtKB-KW"/>
</dbReference>
<dbReference type="GO" id="GO:0008270">
    <property type="term" value="F:zinc ion binding"/>
    <property type="evidence" value="ECO:0007669"/>
    <property type="project" value="UniProtKB-UniRule"/>
</dbReference>
<dbReference type="GO" id="GO:0006355">
    <property type="term" value="P:regulation of DNA-templated transcription"/>
    <property type="evidence" value="ECO:0007669"/>
    <property type="project" value="UniProtKB-UniRule"/>
</dbReference>
<dbReference type="Gene3D" id="2.20.28.90">
    <property type="match status" value="1"/>
</dbReference>
<dbReference type="HAMAP" id="MF_00949">
    <property type="entry name" value="Spt4_arch"/>
    <property type="match status" value="1"/>
</dbReference>
<dbReference type="InterPro" id="IPR029040">
    <property type="entry name" value="RPABC4/Spt4"/>
</dbReference>
<dbReference type="InterPro" id="IPR022800">
    <property type="entry name" value="Spt4/RpoE2_Znf"/>
</dbReference>
<dbReference type="InterPro" id="IPR007178">
    <property type="entry name" value="Spt4_arch"/>
</dbReference>
<dbReference type="InterPro" id="IPR038589">
    <property type="entry name" value="Spt4_dom_sf"/>
</dbReference>
<dbReference type="NCBIfam" id="NF006224">
    <property type="entry name" value="PRK08351.1"/>
    <property type="match status" value="1"/>
</dbReference>
<dbReference type="NCBIfam" id="NF041664">
    <property type="entry name" value="RNAP_arch_Epp"/>
    <property type="match status" value="1"/>
</dbReference>
<dbReference type="PANTHER" id="PTHR40704">
    <property type="entry name" value="TRANSCRIPTION ELONGATION FACTOR SPT4"/>
    <property type="match status" value="1"/>
</dbReference>
<dbReference type="PANTHER" id="PTHR40704:SF1">
    <property type="entry name" value="TRANSCRIPTION ELONGATION FACTOR SPT4"/>
    <property type="match status" value="1"/>
</dbReference>
<dbReference type="Pfam" id="PF06093">
    <property type="entry name" value="Spt4"/>
    <property type="match status" value="1"/>
</dbReference>
<dbReference type="SMART" id="SM01389">
    <property type="entry name" value="Spt4"/>
    <property type="match status" value="1"/>
</dbReference>
<dbReference type="SUPFAM" id="SSF63393">
    <property type="entry name" value="RNA polymerase subunits"/>
    <property type="match status" value="1"/>
</dbReference>
<sequence>MAKERACRHCHYITTEDRCPVCGSRDLSDDWFDLVIVLDVESRIAKKLRESIPEAAKVPGKYAIRVR</sequence>